<name>OGG1_SACI6</name>
<proteinExistence type="inferred from homology"/>
<reference key="1">
    <citation type="journal article" date="2009" name="Proc. Natl. Acad. Sci. U.S.A.">
        <title>Biogeography of the Sulfolobus islandicus pan-genome.</title>
        <authorList>
            <person name="Reno M.L."/>
            <person name="Held N.L."/>
            <person name="Fields C.J."/>
            <person name="Burke P.V."/>
            <person name="Whitaker R.J."/>
        </authorList>
    </citation>
    <scope>NUCLEOTIDE SEQUENCE [LARGE SCALE GENOMIC DNA]</scope>
    <source>
        <strain>M.16.4 / Kamchatka #3</strain>
    </source>
</reference>
<keyword id="KW-0227">DNA damage</keyword>
<keyword id="KW-0234">DNA repair</keyword>
<keyword id="KW-0326">Glycosidase</keyword>
<keyword id="KW-0378">Hydrolase</keyword>
<keyword id="KW-0456">Lyase</keyword>
<keyword id="KW-0511">Multifunctional enzyme</keyword>
<organism>
    <name type="scientific">Saccharolobus islandicus (strain M.16.4 / Kamchatka #3)</name>
    <name type="common">Sulfolobus islandicus</name>
    <dbReference type="NCBI Taxonomy" id="426118"/>
    <lineage>
        <taxon>Archaea</taxon>
        <taxon>Thermoproteota</taxon>
        <taxon>Thermoprotei</taxon>
        <taxon>Sulfolobales</taxon>
        <taxon>Sulfolobaceae</taxon>
        <taxon>Saccharolobus</taxon>
    </lineage>
</organism>
<dbReference type="EC" id="3.2.2.-" evidence="1"/>
<dbReference type="EC" id="4.2.99.18" evidence="1"/>
<dbReference type="EMBL" id="CP001402">
    <property type="protein sequence ID" value="ACR41905.1"/>
    <property type="molecule type" value="Genomic_DNA"/>
</dbReference>
<dbReference type="RefSeq" id="WP_012711322.1">
    <property type="nucleotide sequence ID" value="NC_012726.1"/>
</dbReference>
<dbReference type="SMR" id="C4KH41"/>
<dbReference type="KEGG" id="sid:M164_1300"/>
<dbReference type="HOGENOM" id="CLU_104937_0_0_2"/>
<dbReference type="Proteomes" id="UP000001479">
    <property type="component" value="Chromosome"/>
</dbReference>
<dbReference type="GO" id="GO:0140078">
    <property type="term" value="F:class I DNA-(apurinic or apyrimidinic site) endonuclease activity"/>
    <property type="evidence" value="ECO:0007669"/>
    <property type="project" value="UniProtKB-EC"/>
</dbReference>
<dbReference type="GO" id="GO:0016799">
    <property type="term" value="F:hydrolase activity, hydrolyzing N-glycosyl compounds"/>
    <property type="evidence" value="ECO:0007669"/>
    <property type="project" value="UniProtKB-UniRule"/>
</dbReference>
<dbReference type="GO" id="GO:0006284">
    <property type="term" value="P:base-excision repair"/>
    <property type="evidence" value="ECO:0007669"/>
    <property type="project" value="UniProtKB-UniRule"/>
</dbReference>
<dbReference type="CDD" id="cd00056">
    <property type="entry name" value="ENDO3c"/>
    <property type="match status" value="1"/>
</dbReference>
<dbReference type="Gene3D" id="1.10.1670.10">
    <property type="entry name" value="Helix-hairpin-Helix base-excision DNA repair enzymes (C-terminal)"/>
    <property type="match status" value="1"/>
</dbReference>
<dbReference type="Gene3D" id="1.10.340.30">
    <property type="entry name" value="Hypothetical protein, domain 2"/>
    <property type="match status" value="1"/>
</dbReference>
<dbReference type="HAMAP" id="MF_00241">
    <property type="entry name" value="Ogg"/>
    <property type="match status" value="1"/>
</dbReference>
<dbReference type="InterPro" id="IPR012092">
    <property type="entry name" value="DNA_glyclase/AP_lyase_Ogg"/>
</dbReference>
<dbReference type="InterPro" id="IPR011257">
    <property type="entry name" value="DNA_glycosylase"/>
</dbReference>
<dbReference type="InterPro" id="IPR003265">
    <property type="entry name" value="HhH-GPD_domain"/>
</dbReference>
<dbReference type="InterPro" id="IPR023170">
    <property type="entry name" value="HhH_base_excis_C"/>
</dbReference>
<dbReference type="NCBIfam" id="NF002305">
    <property type="entry name" value="PRK01229.1"/>
    <property type="match status" value="1"/>
</dbReference>
<dbReference type="Pfam" id="PF22175">
    <property type="entry name" value="Ogg-HhH"/>
    <property type="match status" value="1"/>
</dbReference>
<dbReference type="PIRSF" id="PIRSF005954">
    <property type="entry name" value="Thrmst_ogg"/>
    <property type="match status" value="1"/>
</dbReference>
<dbReference type="SMART" id="SM00478">
    <property type="entry name" value="ENDO3c"/>
    <property type="match status" value="1"/>
</dbReference>
<dbReference type="SUPFAM" id="SSF48150">
    <property type="entry name" value="DNA-glycosylase"/>
    <property type="match status" value="1"/>
</dbReference>
<protein>
    <recommendedName>
        <fullName evidence="1">8-oxoguanine DNA glycosylase/AP lyase</fullName>
    </recommendedName>
    <domain>
        <recommendedName>
            <fullName evidence="1">8-oxoguanine DNA glycosylase</fullName>
            <shortName evidence="1">8-oxoG DNA glycosylase</shortName>
            <ecNumber evidence="1">3.2.2.-</ecNumber>
        </recommendedName>
    </domain>
    <domain>
        <recommendedName>
            <fullName evidence="1">DNA-(apurinic or apyrimidinic site) lyase</fullName>
            <shortName evidence="1">AP lyase</shortName>
            <ecNumber evidence="1">4.2.99.18</ecNumber>
        </recommendedName>
    </domain>
</protein>
<gene>
    <name evidence="1" type="primary">ogg</name>
    <name type="ordered locus">M164_1300</name>
</gene>
<sequence>MLRSLVQNPRVRARVLERVDEFRLNNLSNEEVWFRELTLCLLTANSSFISAYQALNCLGDKIYYANEEVIRSILKSCKYRFYNLKAKYIIMAREKVYGKLKEEITPLADSDQQLAREKLLNIKGIGMKEASHFLRNVGYFDLAIIDRHLIDFMRRIGAIGETNVKHLSKSRYISLESVLKSIALNLNISVGILDLFIWYKETNTIVK</sequence>
<feature type="chain" id="PRO_1000204470" description="8-oxoguanine DNA glycosylase/AP lyase">
    <location>
        <begin position="1"/>
        <end position="207"/>
    </location>
</feature>
<feature type="active site" evidence="1">
    <location>
        <position position="128"/>
    </location>
</feature>
<feature type="active site" evidence="1">
    <location>
        <position position="146"/>
    </location>
</feature>
<feature type="site" description="Important for guanine/8-oxoguanine distinction" evidence="1">
    <location>
        <position position="207"/>
    </location>
</feature>
<accession>C4KH41</accession>
<evidence type="ECO:0000255" key="1">
    <source>
        <dbReference type="HAMAP-Rule" id="MF_00241"/>
    </source>
</evidence>
<comment type="function">
    <text evidence="1">Catalyzes the excision of an oxidatively damaged form of guanine (7,8-dihydro-8-oxoguanine = 8-oxoG) from DNA. Also cleaves the DNA backbone at apurinic/apyrimidinic sites (AP sites).</text>
</comment>
<comment type="catalytic activity">
    <reaction evidence="1">
        <text>2'-deoxyribonucleotide-(2'-deoxyribose 5'-phosphate)-2'-deoxyribonucleotide-DNA = a 3'-end 2'-deoxyribonucleotide-(2,3-dehydro-2,3-deoxyribose 5'-phosphate)-DNA + a 5'-end 5'-phospho-2'-deoxyribonucleoside-DNA + H(+)</text>
        <dbReference type="Rhea" id="RHEA:66592"/>
        <dbReference type="Rhea" id="RHEA-COMP:13180"/>
        <dbReference type="Rhea" id="RHEA-COMP:16897"/>
        <dbReference type="Rhea" id="RHEA-COMP:17067"/>
        <dbReference type="ChEBI" id="CHEBI:15378"/>
        <dbReference type="ChEBI" id="CHEBI:136412"/>
        <dbReference type="ChEBI" id="CHEBI:157695"/>
        <dbReference type="ChEBI" id="CHEBI:167181"/>
        <dbReference type="EC" id="4.2.99.18"/>
    </reaction>
</comment>
<comment type="similarity">
    <text evidence="1">Belongs to the type-2 OGG1 family.</text>
</comment>